<reference key="1">
    <citation type="journal article" date="2008" name="J. Bacteriol.">
        <title>Complete genome sequence of the mosquitocidal bacterium Bacillus sphaericus C3-41 and comparison with those of closely related Bacillus species.</title>
        <authorList>
            <person name="Hu X."/>
            <person name="Fan W."/>
            <person name="Han B."/>
            <person name="Liu H."/>
            <person name="Zheng D."/>
            <person name="Li Q."/>
            <person name="Dong W."/>
            <person name="Yan J."/>
            <person name="Gao M."/>
            <person name="Berry C."/>
            <person name="Yuan Z."/>
        </authorList>
    </citation>
    <scope>NUCLEOTIDE SEQUENCE [LARGE SCALE GENOMIC DNA]</scope>
    <source>
        <strain>C3-41</strain>
    </source>
</reference>
<organism>
    <name type="scientific">Lysinibacillus sphaericus (strain C3-41)</name>
    <dbReference type="NCBI Taxonomy" id="444177"/>
    <lineage>
        <taxon>Bacteria</taxon>
        <taxon>Bacillati</taxon>
        <taxon>Bacillota</taxon>
        <taxon>Bacilli</taxon>
        <taxon>Bacillales</taxon>
        <taxon>Bacillaceae</taxon>
        <taxon>Lysinibacillus</taxon>
    </lineage>
</organism>
<proteinExistence type="inferred from homology"/>
<keyword id="KW-0143">Chaperone</keyword>
<keyword id="KW-0963">Cytoplasm</keyword>
<keyword id="KW-0533">Nickel</keyword>
<accession>B1HZE5</accession>
<evidence type="ECO:0000255" key="1">
    <source>
        <dbReference type="HAMAP-Rule" id="MF_00822"/>
    </source>
</evidence>
<sequence>MLIEKIMGNIAHEEEHHEKKTEWIELEWEELSKRILRTETDQGTDIALRLEGDEPLKYGDLLWEDEHRRIAIRTKLEPVIVITPNDMHEMGKSAFELGNRHTPCLIENNEIIVRADHTINPLLDEIGVHYETTERRFKQPFKYRGHSH</sequence>
<dbReference type="EMBL" id="CP000817">
    <property type="protein sequence ID" value="ACA40242.1"/>
    <property type="molecule type" value="Genomic_DNA"/>
</dbReference>
<dbReference type="RefSeq" id="WP_012294328.1">
    <property type="nucleotide sequence ID" value="NC_010382.1"/>
</dbReference>
<dbReference type="SMR" id="B1HZE5"/>
<dbReference type="EnsemblBacteria" id="ACA40242">
    <property type="protein sequence ID" value="ACA40242"/>
    <property type="gene ID" value="Bsph_2702"/>
</dbReference>
<dbReference type="KEGG" id="lsp:Bsph_2702"/>
<dbReference type="HOGENOM" id="CLU_093757_3_1_9"/>
<dbReference type="Proteomes" id="UP000002164">
    <property type="component" value="Chromosome"/>
</dbReference>
<dbReference type="GO" id="GO:0005737">
    <property type="term" value="C:cytoplasm"/>
    <property type="evidence" value="ECO:0007669"/>
    <property type="project" value="UniProtKB-SubCell"/>
</dbReference>
<dbReference type="GO" id="GO:0016151">
    <property type="term" value="F:nickel cation binding"/>
    <property type="evidence" value="ECO:0007669"/>
    <property type="project" value="UniProtKB-UniRule"/>
</dbReference>
<dbReference type="GO" id="GO:0051082">
    <property type="term" value="F:unfolded protein binding"/>
    <property type="evidence" value="ECO:0007669"/>
    <property type="project" value="UniProtKB-UniRule"/>
</dbReference>
<dbReference type="GO" id="GO:0006457">
    <property type="term" value="P:protein folding"/>
    <property type="evidence" value="ECO:0007669"/>
    <property type="project" value="InterPro"/>
</dbReference>
<dbReference type="GO" id="GO:0065003">
    <property type="term" value="P:protein-containing complex assembly"/>
    <property type="evidence" value="ECO:0007669"/>
    <property type="project" value="InterPro"/>
</dbReference>
<dbReference type="GO" id="GO:0019627">
    <property type="term" value="P:urea metabolic process"/>
    <property type="evidence" value="ECO:0007669"/>
    <property type="project" value="InterPro"/>
</dbReference>
<dbReference type="CDD" id="cd00571">
    <property type="entry name" value="UreE"/>
    <property type="match status" value="1"/>
</dbReference>
<dbReference type="Gene3D" id="2.60.260.20">
    <property type="entry name" value="Urease metallochaperone UreE, N-terminal domain"/>
    <property type="match status" value="1"/>
</dbReference>
<dbReference type="Gene3D" id="3.30.70.790">
    <property type="entry name" value="UreE, C-terminal domain"/>
    <property type="match status" value="1"/>
</dbReference>
<dbReference type="HAMAP" id="MF_00822">
    <property type="entry name" value="UreE"/>
    <property type="match status" value="1"/>
</dbReference>
<dbReference type="InterPro" id="IPR012406">
    <property type="entry name" value="UreE"/>
</dbReference>
<dbReference type="InterPro" id="IPR007864">
    <property type="entry name" value="UreE_C_dom"/>
</dbReference>
<dbReference type="InterPro" id="IPR004029">
    <property type="entry name" value="UreE_N"/>
</dbReference>
<dbReference type="InterPro" id="IPR036118">
    <property type="entry name" value="UreE_N_sf"/>
</dbReference>
<dbReference type="Pfam" id="PF05194">
    <property type="entry name" value="UreE_C"/>
    <property type="match status" value="1"/>
</dbReference>
<dbReference type="Pfam" id="PF02814">
    <property type="entry name" value="UreE_N"/>
    <property type="match status" value="1"/>
</dbReference>
<dbReference type="PIRSF" id="PIRSF036402">
    <property type="entry name" value="Ureas_acces_UreE"/>
    <property type="match status" value="1"/>
</dbReference>
<dbReference type="SMART" id="SM00988">
    <property type="entry name" value="UreE_N"/>
    <property type="match status" value="1"/>
</dbReference>
<dbReference type="SUPFAM" id="SSF69737">
    <property type="entry name" value="Urease metallochaperone UreE, C-terminal domain"/>
    <property type="match status" value="1"/>
</dbReference>
<dbReference type="SUPFAM" id="SSF69287">
    <property type="entry name" value="Urease metallochaperone UreE, N-terminal domain"/>
    <property type="match status" value="1"/>
</dbReference>
<gene>
    <name evidence="1" type="primary">ureE</name>
    <name type="ordered locus">Bsph_2702</name>
</gene>
<feature type="chain" id="PRO_1000197442" description="Urease accessory protein UreE">
    <location>
        <begin position="1"/>
        <end position="148"/>
    </location>
</feature>
<comment type="function">
    <text evidence="1">Involved in urease metallocenter assembly. Binds nickel. Probably functions as a nickel donor during metallocenter assembly.</text>
</comment>
<comment type="subcellular location">
    <subcellularLocation>
        <location evidence="1">Cytoplasm</location>
    </subcellularLocation>
</comment>
<comment type="similarity">
    <text evidence="1">Belongs to the UreE family.</text>
</comment>
<name>UREE_LYSSC</name>
<protein>
    <recommendedName>
        <fullName evidence="1">Urease accessory protein UreE</fullName>
    </recommendedName>
</protein>